<protein>
    <recommendedName>
        <fullName evidence="10">Gamma-aminobutyric acid receptor subunit alpha-2</fullName>
    </recommendedName>
    <alternativeName>
        <fullName evidence="3">GABA(A) receptor subunit alpha-2</fullName>
        <shortName evidence="11">GABAAR subunit alpha-2</shortName>
    </alternativeName>
</protein>
<accession>P23576</accession>
<name>GBRA2_RAT</name>
<organism>
    <name type="scientific">Rattus norvegicus</name>
    <name type="common">Rat</name>
    <dbReference type="NCBI Taxonomy" id="10116"/>
    <lineage>
        <taxon>Eukaryota</taxon>
        <taxon>Metazoa</taxon>
        <taxon>Chordata</taxon>
        <taxon>Craniata</taxon>
        <taxon>Vertebrata</taxon>
        <taxon>Euteleostomi</taxon>
        <taxon>Mammalia</taxon>
        <taxon>Eutheria</taxon>
        <taxon>Euarchontoglires</taxon>
        <taxon>Glires</taxon>
        <taxon>Rodentia</taxon>
        <taxon>Myomorpha</taxon>
        <taxon>Muroidea</taxon>
        <taxon>Muridae</taxon>
        <taxon>Murinae</taxon>
        <taxon>Rattus</taxon>
    </lineage>
</organism>
<proteinExistence type="evidence at protein level"/>
<keyword id="KW-1003">Cell membrane</keyword>
<keyword id="KW-0966">Cell projection</keyword>
<keyword id="KW-0868">Chloride</keyword>
<keyword id="KW-0869">Chloride channel</keyword>
<keyword id="KW-0968">Cytoplasmic vesicle</keyword>
<keyword id="KW-1015">Disulfide bond</keyword>
<keyword id="KW-0325">Glycoprotein</keyword>
<keyword id="KW-0407">Ion channel</keyword>
<keyword id="KW-0406">Ion transport</keyword>
<keyword id="KW-1071">Ligand-gated ion channel</keyword>
<keyword id="KW-0472">Membrane</keyword>
<keyword id="KW-0628">Postsynaptic cell membrane</keyword>
<keyword id="KW-0675">Receptor</keyword>
<keyword id="KW-1185">Reference proteome</keyword>
<keyword id="KW-0732">Signal</keyword>
<keyword id="KW-0770">Synapse</keyword>
<keyword id="KW-0812">Transmembrane</keyword>
<keyword id="KW-1133">Transmembrane helix</keyword>
<keyword id="KW-0813">Transport</keyword>
<gene>
    <name evidence="13" type="primary">Gabra2</name>
    <name type="synonym">Gabra-2</name>
</gene>
<sequence>MRTKLSTCNVWFPLLVLLVWNPARLVLANIQEDEAKNNITIFTRILDRLLDGYDNRLRPGLGDSITEVFTNIYVTSFGPVSDTDMEYTIDVFFRQKWKDERLKFKGPMNILRLNNSMASKIWTPDTFFHNGKKSVAHNMTMPNKLLRIQDDGTLLYTMRLTVQAECPMHLEDFPMDAHSCPLKFGSYAYTTSEVTYIWTYNPSDSVQVAPDGSRLNQYDLLGQSIGKETIKSSTGEYTVMTAHFHLKRKIGYFVIQTYLPCIMTVILSQVSFWLNRESVPARTVFGVTTVLTMTTLSISARNSLPKVAYATAMDWFIAVCYAFVFSALIEFATVNYFTKRGWAWDGKSVVNDKKKEKGSVMIQNNAYAVAVANYAPNLSKDPVLSTISKSATTPEPNKKPENKPAEAKKTFNSVSKIDRMSRIVFPVLFGTFNLVYWATYLNREPVLGVSP</sequence>
<feature type="signal peptide" evidence="7">
    <location>
        <begin position="1"/>
        <end position="28"/>
    </location>
</feature>
<feature type="chain" id="PRO_0000000435" description="Gamma-aminobutyric acid receptor subunit alpha-2">
    <location>
        <begin position="29"/>
        <end position="451"/>
    </location>
</feature>
<feature type="topological domain" description="Extracellular" evidence="12">
    <location>
        <begin position="29"/>
        <end position="249"/>
    </location>
</feature>
<feature type="transmembrane region" description="Helical" evidence="7">
    <location>
        <begin position="250"/>
        <end position="270"/>
    </location>
</feature>
<feature type="transmembrane region" description="Helical" evidence="7">
    <location>
        <begin position="281"/>
        <end position="300"/>
    </location>
</feature>
<feature type="transmembrane region" description="Helical" evidence="7">
    <location>
        <begin position="312"/>
        <end position="332"/>
    </location>
</feature>
<feature type="topological domain" description="Cytoplasmic" evidence="12">
    <location>
        <begin position="333"/>
        <end position="420"/>
    </location>
</feature>
<feature type="transmembrane region" description="Helical" evidence="7">
    <location>
        <begin position="421"/>
        <end position="441"/>
    </location>
</feature>
<feature type="topological domain" description="Extracellular" evidence="12">
    <location>
        <begin position="442"/>
        <end position="451"/>
    </location>
</feature>
<feature type="region of interest" description="Disordered" evidence="8">
    <location>
        <begin position="389"/>
        <end position="408"/>
    </location>
</feature>
<feature type="compositionally biased region" description="Basic and acidic residues" evidence="8">
    <location>
        <begin position="396"/>
        <end position="408"/>
    </location>
</feature>
<feature type="binding site" evidence="2">
    <location>
        <position position="94"/>
    </location>
    <ligand>
        <name>4-aminobutanoate</name>
        <dbReference type="ChEBI" id="CHEBI:59888"/>
        <note>ligand shared with the neighboring beta subunit</note>
    </ligand>
</feature>
<feature type="binding site" evidence="6">
    <location>
        <position position="157"/>
    </location>
    <ligand>
        <name>4-aminobutanoate</name>
        <dbReference type="ChEBI" id="CHEBI:59888"/>
        <note>ligand shared with the neighboring beta subunit</note>
    </ligand>
</feature>
<feature type="glycosylation site" description="N-linked (GlcNAc...) asparagine" evidence="7">
    <location>
        <position position="38"/>
    </location>
</feature>
<feature type="glycosylation site" description="N-linked (GlcNAc...) asparagine" evidence="7">
    <location>
        <position position="114"/>
    </location>
</feature>
<feature type="glycosylation site" description="N-linked (GlcNAc...) asparagine" evidence="7">
    <location>
        <position position="138"/>
    </location>
</feature>
<feature type="disulfide bond" evidence="4">
    <location>
        <begin position="166"/>
        <end position="180"/>
    </location>
</feature>
<reference key="1">
    <citation type="journal article" date="1991" name="J. Neurochem.">
        <title>Sequence and regional distribution of the mRNA encoding the alpha 2 polypeptide of rat gamma-aminobutyric acidA receptors.</title>
        <authorList>
            <person name="Khrestchatisky M."/>
            <person name="Maclennan A.J."/>
            <person name="Tillakaratne N.J.K."/>
            <person name="Chiang M.Y."/>
            <person name="Tobin A.J."/>
        </authorList>
    </citation>
    <scope>NUCLEOTIDE SEQUENCE [GENOMIC DNA]</scope>
    <source>
        <tissue>Brain</tissue>
    </source>
</reference>
<reference key="2">
    <citation type="journal article" date="2014" name="Eur. J. Cell Biol.">
        <title>The kinesin KIF21B participates in the cell surface delivery of gamma2 subunit-containing GABAA receptors.</title>
        <authorList>
            <person name="Labonte D."/>
            <person name="Thies E."/>
            <person name="Kneussel M."/>
        </authorList>
    </citation>
    <scope>INTERACTION WITH KIF21B</scope>
    <scope>SUBCELLULAR LOCATION</scope>
    <scope>TISSUE SPECIFICITY</scope>
</reference>
<dbReference type="EMBL" id="L08491">
    <property type="protein sequence ID" value="AAC42030.1"/>
    <property type="status" value="ALT_SEQ"/>
    <property type="molecule type" value="Genomic_DNA"/>
</dbReference>
<dbReference type="PIR" id="JH0370">
    <property type="entry name" value="JH0370"/>
</dbReference>
<dbReference type="SMR" id="P23576"/>
<dbReference type="ComplexPortal" id="CPX-412">
    <property type="entry name" value="GABA-A receptor, alpha2-beta3-gamma2"/>
</dbReference>
<dbReference type="CORUM" id="P23576"/>
<dbReference type="FunCoup" id="P23576">
    <property type="interactions" value="1534"/>
</dbReference>
<dbReference type="STRING" id="10116.ENSRNOP00000003197"/>
<dbReference type="BindingDB" id="P23576"/>
<dbReference type="ChEMBL" id="CHEMBL341"/>
<dbReference type="DrugCentral" id="P23576"/>
<dbReference type="GlyCosmos" id="P23576">
    <property type="glycosylation" value="3 sites, 12 glycans"/>
</dbReference>
<dbReference type="GlyGen" id="P23576">
    <property type="glycosylation" value="3 sites, 11 N-linked glycans (1 site)"/>
</dbReference>
<dbReference type="iPTMnet" id="P23576"/>
<dbReference type="PhosphoSitePlus" id="P23576"/>
<dbReference type="PaxDb" id="10116-ENSRNOP00000060621"/>
<dbReference type="ABCD" id="P23576">
    <property type="antibodies" value="2 sequenced antibodies"/>
</dbReference>
<dbReference type="UCSC" id="RGD:61856">
    <property type="organism name" value="rat"/>
</dbReference>
<dbReference type="AGR" id="RGD:61856"/>
<dbReference type="RGD" id="61856">
    <property type="gene designation" value="Gabra2"/>
</dbReference>
<dbReference type="eggNOG" id="KOG3642">
    <property type="taxonomic scope" value="Eukaryota"/>
</dbReference>
<dbReference type="InParanoid" id="P23576"/>
<dbReference type="PhylomeDB" id="P23576"/>
<dbReference type="Reactome" id="R-RNO-977443">
    <property type="pathway name" value="GABA receptor activation"/>
</dbReference>
<dbReference type="PRO" id="PR:P23576"/>
<dbReference type="Proteomes" id="UP000002494">
    <property type="component" value="Unplaced"/>
</dbReference>
<dbReference type="GO" id="GO:0030424">
    <property type="term" value="C:axon"/>
    <property type="evidence" value="ECO:0000266"/>
    <property type="project" value="RGD"/>
</dbReference>
<dbReference type="GO" id="GO:0034707">
    <property type="term" value="C:chloride channel complex"/>
    <property type="evidence" value="ECO:0007669"/>
    <property type="project" value="UniProtKB-KW"/>
</dbReference>
<dbReference type="GO" id="GO:0030425">
    <property type="term" value="C:dendrite"/>
    <property type="evidence" value="ECO:0000266"/>
    <property type="project" value="RGD"/>
</dbReference>
<dbReference type="GO" id="GO:0032590">
    <property type="term" value="C:dendrite membrane"/>
    <property type="evidence" value="ECO:0000314"/>
    <property type="project" value="BHF-UCL"/>
</dbReference>
<dbReference type="GO" id="GO:1902711">
    <property type="term" value="C:GABA-A receptor complex"/>
    <property type="evidence" value="ECO:0000266"/>
    <property type="project" value="RGD"/>
</dbReference>
<dbReference type="GO" id="GO:0098982">
    <property type="term" value="C:GABA-ergic synapse"/>
    <property type="evidence" value="ECO:0000314"/>
    <property type="project" value="SynGO"/>
</dbReference>
<dbReference type="GO" id="GO:0060077">
    <property type="term" value="C:inhibitory synapse"/>
    <property type="evidence" value="ECO:0000266"/>
    <property type="project" value="RGD"/>
</dbReference>
<dbReference type="GO" id="GO:0043025">
    <property type="term" value="C:neuronal cell body"/>
    <property type="evidence" value="ECO:0000266"/>
    <property type="project" value="RGD"/>
</dbReference>
<dbReference type="GO" id="GO:0098794">
    <property type="term" value="C:postsynapse"/>
    <property type="evidence" value="ECO:0000266"/>
    <property type="project" value="RGD"/>
</dbReference>
<dbReference type="GO" id="GO:0099634">
    <property type="term" value="C:postsynaptic specialization membrane"/>
    <property type="evidence" value="ECO:0000314"/>
    <property type="project" value="SynGO"/>
</dbReference>
<dbReference type="GO" id="GO:0048787">
    <property type="term" value="C:presynaptic active zone membrane"/>
    <property type="evidence" value="ECO:0000314"/>
    <property type="project" value="SynGO"/>
</dbReference>
<dbReference type="GO" id="GO:0030672">
    <property type="term" value="C:synaptic vesicle membrane"/>
    <property type="evidence" value="ECO:0000266"/>
    <property type="project" value="RGD"/>
</dbReference>
<dbReference type="GO" id="GO:0008503">
    <property type="term" value="F:benzodiazepine receptor activity"/>
    <property type="evidence" value="ECO:0000266"/>
    <property type="project" value="RGD"/>
</dbReference>
<dbReference type="GO" id="GO:0004890">
    <property type="term" value="F:GABA-A receptor activity"/>
    <property type="evidence" value="ECO:0000304"/>
    <property type="project" value="RGD"/>
</dbReference>
<dbReference type="GO" id="GO:0022851">
    <property type="term" value="F:GABA-gated chloride ion channel activity"/>
    <property type="evidence" value="ECO:0000266"/>
    <property type="project" value="RGD"/>
</dbReference>
<dbReference type="GO" id="GO:0099507">
    <property type="term" value="F:ligand-gated monoatomic ion channel activity involved in regulation of presynaptic membrane potential"/>
    <property type="evidence" value="ECO:0000266"/>
    <property type="project" value="RGD"/>
</dbReference>
<dbReference type="GO" id="GO:1904315">
    <property type="term" value="F:transmitter-gated monoatomic ion channel activity involved in regulation of postsynaptic membrane potential"/>
    <property type="evidence" value="ECO:0000266"/>
    <property type="project" value="RGD"/>
</dbReference>
<dbReference type="GO" id="GO:1902476">
    <property type="term" value="P:chloride transmembrane transport"/>
    <property type="evidence" value="ECO:0000266"/>
    <property type="project" value="RGD"/>
</dbReference>
<dbReference type="GO" id="GO:0007214">
    <property type="term" value="P:gamma-aminobutyric acid signaling pathway"/>
    <property type="evidence" value="ECO:0000266"/>
    <property type="project" value="RGD"/>
</dbReference>
<dbReference type="GO" id="GO:1904862">
    <property type="term" value="P:inhibitory synapse assembly"/>
    <property type="evidence" value="ECO:0000250"/>
    <property type="project" value="UniProtKB"/>
</dbReference>
<dbReference type="GO" id="GO:0051932">
    <property type="term" value="P:synaptic transmission, GABAergic"/>
    <property type="evidence" value="ECO:0000318"/>
    <property type="project" value="GO_Central"/>
</dbReference>
<dbReference type="CDD" id="cd19052">
    <property type="entry name" value="LGIC_TM_GABAAR_alpha"/>
    <property type="match status" value="1"/>
</dbReference>
<dbReference type="FunFam" id="2.70.170.10:FF:000001">
    <property type="entry name" value="Gamma-aminobutyric acid A receptor subunit alpha-2"/>
    <property type="match status" value="1"/>
</dbReference>
<dbReference type="FunFam" id="1.20.58.390:FF:000002">
    <property type="entry name" value="Putative gamma-aminobutyric acid receptor subunit alpha-5"/>
    <property type="match status" value="1"/>
</dbReference>
<dbReference type="Gene3D" id="2.70.170.10">
    <property type="entry name" value="Neurotransmitter-gated ion-channel ligand-binding domain"/>
    <property type="match status" value="1"/>
</dbReference>
<dbReference type="Gene3D" id="1.20.58.390">
    <property type="entry name" value="Neurotransmitter-gated ion-channel transmembrane domain"/>
    <property type="match status" value="1"/>
</dbReference>
<dbReference type="InterPro" id="IPR006028">
    <property type="entry name" value="GABAA/Glycine_rcpt"/>
</dbReference>
<dbReference type="InterPro" id="IPR001390">
    <property type="entry name" value="GABAAa_rcpt"/>
</dbReference>
<dbReference type="InterPro" id="IPR005432">
    <property type="entry name" value="GABBAa2_rcpt"/>
</dbReference>
<dbReference type="InterPro" id="IPR047024">
    <property type="entry name" value="Gabra-1-6_TM"/>
</dbReference>
<dbReference type="InterPro" id="IPR006202">
    <property type="entry name" value="Neur_chan_lig-bd"/>
</dbReference>
<dbReference type="InterPro" id="IPR036734">
    <property type="entry name" value="Neur_chan_lig-bd_sf"/>
</dbReference>
<dbReference type="InterPro" id="IPR006201">
    <property type="entry name" value="Neur_channel"/>
</dbReference>
<dbReference type="InterPro" id="IPR036719">
    <property type="entry name" value="Neuro-gated_channel_TM_sf"/>
</dbReference>
<dbReference type="InterPro" id="IPR038050">
    <property type="entry name" value="Neuro_actylchol_rec"/>
</dbReference>
<dbReference type="InterPro" id="IPR006029">
    <property type="entry name" value="Neurotrans-gated_channel_TM"/>
</dbReference>
<dbReference type="InterPro" id="IPR018000">
    <property type="entry name" value="Neurotransmitter_ion_chnl_CS"/>
</dbReference>
<dbReference type="NCBIfam" id="TIGR00860">
    <property type="entry name" value="LIC"/>
    <property type="match status" value="1"/>
</dbReference>
<dbReference type="PANTHER" id="PTHR18945">
    <property type="entry name" value="NEUROTRANSMITTER GATED ION CHANNEL"/>
    <property type="match status" value="1"/>
</dbReference>
<dbReference type="Pfam" id="PF02931">
    <property type="entry name" value="Neur_chan_LBD"/>
    <property type="match status" value="1"/>
</dbReference>
<dbReference type="Pfam" id="PF02932">
    <property type="entry name" value="Neur_chan_memb"/>
    <property type="match status" value="2"/>
</dbReference>
<dbReference type="PRINTS" id="PR01079">
    <property type="entry name" value="GABAARALPHA"/>
</dbReference>
<dbReference type="PRINTS" id="PR01615">
    <property type="entry name" value="GABAARALPHA2"/>
</dbReference>
<dbReference type="PRINTS" id="PR00253">
    <property type="entry name" value="GABAARECEPTR"/>
</dbReference>
<dbReference type="PRINTS" id="PR00252">
    <property type="entry name" value="NRIONCHANNEL"/>
</dbReference>
<dbReference type="SUPFAM" id="SSF90112">
    <property type="entry name" value="Neurotransmitter-gated ion-channel transmembrane pore"/>
    <property type="match status" value="1"/>
</dbReference>
<dbReference type="SUPFAM" id="SSF63712">
    <property type="entry name" value="Nicotinic receptor ligand binding domain-like"/>
    <property type="match status" value="1"/>
</dbReference>
<dbReference type="PROSITE" id="PS00236">
    <property type="entry name" value="NEUROTR_ION_CHANNEL"/>
    <property type="match status" value="1"/>
</dbReference>
<evidence type="ECO:0000250" key="1">
    <source>
        <dbReference type="UniProtKB" id="P10063"/>
    </source>
</evidence>
<evidence type="ECO:0000250" key="2">
    <source>
        <dbReference type="UniProtKB" id="P14867"/>
    </source>
</evidence>
<evidence type="ECO:0000250" key="3">
    <source>
        <dbReference type="UniProtKB" id="P26048"/>
    </source>
</evidence>
<evidence type="ECO:0000250" key="4">
    <source>
        <dbReference type="UniProtKB" id="P28472"/>
    </source>
</evidence>
<evidence type="ECO:0000250" key="5">
    <source>
        <dbReference type="UniProtKB" id="P47869"/>
    </source>
</evidence>
<evidence type="ECO:0000250" key="6">
    <source>
        <dbReference type="UniProtKB" id="P62813"/>
    </source>
</evidence>
<evidence type="ECO:0000255" key="7"/>
<evidence type="ECO:0000256" key="8">
    <source>
        <dbReference type="SAM" id="MobiDB-lite"/>
    </source>
</evidence>
<evidence type="ECO:0000269" key="9">
    <source>
    </source>
</evidence>
<evidence type="ECO:0000303" key="10">
    <source>
    </source>
</evidence>
<evidence type="ECO:0000303" key="11">
    <source>
    </source>
</evidence>
<evidence type="ECO:0000305" key="12"/>
<evidence type="ECO:0000312" key="13">
    <source>
        <dbReference type="RGD" id="61856"/>
    </source>
</evidence>
<comment type="function">
    <text evidence="1 2 3 5">Alpha subunit of the heteropentameric ligand-gated chloride channel gated by gamma-aminobutyric acid (GABA), a major inhibitory neurotransmitter in the brain (By similarity). GABA-gated chloride channels, also named GABA(A) receptors (GABAAR), consist of five subunits arranged around a central pore and contain GABA active binding site(s) located at the alpha and beta subunit interface(s) (By similarity). When activated by GABA, GABAARs selectively allow the flow of chloride anions across the cell membrane down their electrochemical gradient (By similarity). Chloride influx into the postsynaptic neuron following GABAAR opening decreases the neuron ability to generate a new action potential, thereby reducing nerve transmission (By similarity). The alpha-2 subunit exhibits synaptogenic activity together with beta-2 and very little to no activity together with beta-3, the gamma-2 subunit being necessary but not sufficient to induce rapid synaptic contacts formation (By similarity).</text>
</comment>
<comment type="catalytic activity">
    <reaction evidence="1">
        <text>chloride(in) = chloride(out)</text>
        <dbReference type="Rhea" id="RHEA:29823"/>
        <dbReference type="ChEBI" id="CHEBI:17996"/>
    </reaction>
</comment>
<comment type="activity regulation">
    <text evidence="1">Activated by pentobarbital (By similarity). Inhibited by the antagonist bicuculline (By similarity).</text>
</comment>
<comment type="subunit">
    <text evidence="3 9">Heteropentamer, formed by a combination of alpha (GABRA1-6), beta (GABRB1-3), gamma (GABRG1-3), delta (GABRD), epsilon (GABRE), rho (GABRR1-3), pi (GABRP) and theta (GABRQ) subunits, each subunit exhibiting distinct physiological and pharmacological properties (By similarity). Binds UBQLN1 (By similarity). Interacts with KIF21B (PubMed:25172774). Interacts with LHFPL4 (By similarity). Interacts with SHISA7; interaction leads to the regulation of GABA(A) receptor trafficking, channel deactivation kinetics and pharmacology (By similarity).</text>
</comment>
<comment type="subcellular location">
    <subcellularLocation>
        <location evidence="3">Postsynaptic cell membrane</location>
        <topology evidence="7">Multi-pass membrane protein</topology>
    </subcellularLocation>
    <subcellularLocation>
        <location evidence="3">Cell membrane</location>
        <topology evidence="7">Multi-pass membrane protein</topology>
    </subcellularLocation>
    <subcellularLocation>
        <location evidence="9">Cytoplasmic vesicle membrane</location>
    </subcellularLocation>
    <subcellularLocation>
        <location evidence="3">Cell projection</location>
        <location evidence="3">Dendrite</location>
    </subcellularLocation>
</comment>
<comment type="tissue specificity">
    <text evidence="9">Expressed in brain (at protein level).</text>
</comment>
<comment type="domain">
    <text evidence="3">The extracellular domain contributes to synaptic contact formation.</text>
</comment>
<comment type="domain">
    <text evidence="2">The GABA-binding pockets are located at the interface between neighboring alpha and beta subunits.</text>
</comment>
<comment type="domain">
    <text evidence="2">GABAARs subunits share a common topological structure: a peptide sequence made up of a long extracellular N-terminal, four transmembrane domains, intracellular or cytoplasmic domain located between the third and the fourth transmembrane domains.</text>
</comment>
<comment type="PTM">
    <text evidence="3">Glycosylated.</text>
</comment>
<comment type="similarity">
    <text evidence="12">Belongs to the ligand-gated ion channel (TC 1.A.9) family. Gamma-aminobutyric acid receptor (TC 1.A.9.5) subfamily. GABRA2 sub-subfamily.</text>
</comment>